<evidence type="ECO:0000256" key="1">
    <source>
        <dbReference type="SAM" id="MobiDB-lite"/>
    </source>
</evidence>
<evidence type="ECO:0000305" key="2"/>
<comment type="sequence caution" evidence="2">
    <conflict type="erroneous gene model prediction">
        <sequence resource="EMBL-CDS" id="BAB01303"/>
    </conflict>
</comment>
<name>FB166_ARATH</name>
<gene>
    <name type="ordered locus">At3g19890</name>
    <name type="ORF">MPN9.13</name>
</gene>
<reference key="1">
    <citation type="journal article" date="2000" name="DNA Res.">
        <title>Structural analysis of Arabidopsis thaliana chromosome 3. I. Sequence features of the regions of 4,504,864 bp covered by sixty P1 and TAC clones.</title>
        <authorList>
            <person name="Sato S."/>
            <person name="Nakamura Y."/>
            <person name="Kaneko T."/>
            <person name="Katoh T."/>
            <person name="Asamizu E."/>
            <person name="Tabata S."/>
        </authorList>
    </citation>
    <scope>NUCLEOTIDE SEQUENCE [LARGE SCALE GENOMIC DNA]</scope>
    <source>
        <strain>cv. Columbia</strain>
    </source>
</reference>
<reference key="2">
    <citation type="journal article" date="2017" name="Plant J.">
        <title>Araport11: a complete reannotation of the Arabidopsis thaliana reference genome.</title>
        <authorList>
            <person name="Cheng C.Y."/>
            <person name="Krishnakumar V."/>
            <person name="Chan A.P."/>
            <person name="Thibaud-Nissen F."/>
            <person name="Schobel S."/>
            <person name="Town C.D."/>
        </authorList>
    </citation>
    <scope>GENOME REANNOTATION</scope>
    <source>
        <strain>cv. Columbia</strain>
    </source>
</reference>
<reference key="3">
    <citation type="submission" date="2005-05" db="EMBL/GenBank/DDBJ databases">
        <authorList>
            <person name="Underwood B.A."/>
            <person name="Xiao Y.-L."/>
            <person name="Moskal W.A. Jr."/>
            <person name="Monaghan E.L."/>
            <person name="Wang W."/>
            <person name="Redman J.C."/>
            <person name="Wu H.C."/>
            <person name="Utterback T."/>
            <person name="Town C.D."/>
        </authorList>
    </citation>
    <scope>NUCLEOTIDE SEQUENCE [LARGE SCALE MRNA]</scope>
    <source>
        <strain>cv. Columbia</strain>
    </source>
</reference>
<dbReference type="EMBL" id="AB025631">
    <property type="protein sequence ID" value="BAB01303.1"/>
    <property type="status" value="ALT_SEQ"/>
    <property type="molecule type" value="Genomic_DNA"/>
</dbReference>
<dbReference type="EMBL" id="CP002686">
    <property type="protein sequence ID" value="AEE76304.1"/>
    <property type="molecule type" value="Genomic_DNA"/>
</dbReference>
<dbReference type="EMBL" id="DQ056598">
    <property type="protein sequence ID" value="AAY78746.1"/>
    <property type="molecule type" value="mRNA"/>
</dbReference>
<dbReference type="RefSeq" id="NP_188623.1">
    <property type="nucleotide sequence ID" value="NM_112879.1"/>
</dbReference>
<dbReference type="FunCoup" id="Q4PSN8">
    <property type="interactions" value="1"/>
</dbReference>
<dbReference type="STRING" id="3702.Q4PSN8"/>
<dbReference type="PaxDb" id="3702-AT3G19890.1"/>
<dbReference type="EnsemblPlants" id="AT3G19890.1">
    <property type="protein sequence ID" value="AT3G19890.1"/>
    <property type="gene ID" value="AT3G19890"/>
</dbReference>
<dbReference type="GeneID" id="821526"/>
<dbReference type="Gramene" id="AT3G19890.1">
    <property type="protein sequence ID" value="AT3G19890.1"/>
    <property type="gene ID" value="AT3G19890"/>
</dbReference>
<dbReference type="KEGG" id="ath:AT3G19890"/>
<dbReference type="Araport" id="AT3G19890"/>
<dbReference type="TAIR" id="AT3G19890"/>
<dbReference type="HOGENOM" id="CLU_034692_0_0_1"/>
<dbReference type="InParanoid" id="Q4PSN8"/>
<dbReference type="OMA" id="EPHDESD"/>
<dbReference type="PhylomeDB" id="Q4PSN8"/>
<dbReference type="PRO" id="PR:Q4PSN8"/>
<dbReference type="Proteomes" id="UP000006548">
    <property type="component" value="Chromosome 3"/>
</dbReference>
<dbReference type="ExpressionAtlas" id="Q4PSN8">
    <property type="expression patterns" value="baseline and differential"/>
</dbReference>
<dbReference type="InterPro" id="IPR006527">
    <property type="entry name" value="F-box-assoc_dom_typ1"/>
</dbReference>
<dbReference type="InterPro" id="IPR017451">
    <property type="entry name" value="F-box-assoc_interact_dom"/>
</dbReference>
<dbReference type="InterPro" id="IPR036047">
    <property type="entry name" value="F-box-like_dom_sf"/>
</dbReference>
<dbReference type="InterPro" id="IPR001810">
    <property type="entry name" value="F-box_dom"/>
</dbReference>
<dbReference type="InterPro" id="IPR011043">
    <property type="entry name" value="Gal_Oxase/kelch_b-propeller"/>
</dbReference>
<dbReference type="InterPro" id="IPR050796">
    <property type="entry name" value="SCF_F-box_component"/>
</dbReference>
<dbReference type="NCBIfam" id="TIGR01640">
    <property type="entry name" value="F_box_assoc_1"/>
    <property type="match status" value="1"/>
</dbReference>
<dbReference type="PANTHER" id="PTHR31672">
    <property type="entry name" value="BNACNNG10540D PROTEIN"/>
    <property type="match status" value="1"/>
</dbReference>
<dbReference type="PANTHER" id="PTHR31672:SF13">
    <property type="entry name" value="F-BOX PROTEIN CPR30-LIKE"/>
    <property type="match status" value="1"/>
</dbReference>
<dbReference type="Pfam" id="PF00646">
    <property type="entry name" value="F-box"/>
    <property type="match status" value="1"/>
</dbReference>
<dbReference type="Pfam" id="PF07734">
    <property type="entry name" value="FBA_1"/>
    <property type="match status" value="1"/>
</dbReference>
<dbReference type="SUPFAM" id="SSF81383">
    <property type="entry name" value="F-box domain"/>
    <property type="match status" value="1"/>
</dbReference>
<dbReference type="SUPFAM" id="SSF50965">
    <property type="entry name" value="Galactose oxidase, central domain"/>
    <property type="match status" value="1"/>
</dbReference>
<proteinExistence type="evidence at transcript level"/>
<keyword id="KW-1185">Reference proteome</keyword>
<feature type="chain" id="PRO_0000283436" description="F-box protein At3g19890">
    <location>
        <begin position="1"/>
        <end position="410"/>
    </location>
</feature>
<feature type="domain" description="F-box">
    <location>
        <begin position="2"/>
        <end position="49"/>
    </location>
</feature>
<feature type="region of interest" description="Disordered" evidence="1">
    <location>
        <begin position="386"/>
        <end position="410"/>
    </location>
</feature>
<feature type="compositionally biased region" description="Basic and acidic residues" evidence="1">
    <location>
        <begin position="387"/>
        <end position="398"/>
    </location>
</feature>
<feature type="compositionally biased region" description="Basic residues" evidence="1">
    <location>
        <begin position="399"/>
        <end position="410"/>
    </location>
</feature>
<accession>Q4PSN8</accession>
<accession>Q9LT20</accession>
<sequence>MTMISDLSKDLVEEILSKAPITSLGAVRSTHKQWNALSKGRLLYKAEAKDQFLGFMVMDHRFLSMIFHLNGILKGDGEGFDRPSIREVGDIVNQIDISKVFQCDGLVLCVPSDNSSVVVWNPYLGQTKWIEAREPHDESDMFALGYDKDKNHKILRLYDECYYYYEVYNFKTESWGEEDHLPGWDIDSYNRGVSLNGNTYFLTQEQRAKDKYRVFLLCFNFTTEKFENFIAMPFKYHRKYVGTLSCVGNEKLAALYQRWDTGEMAIWVTTKIESNEVLWSNLFKVDMKPLVRFGFQQCKDEAGSFFIDEEKKLAVVFNLDKKRGKRNNKTRCYHTAYIIGEKGYLKKEVLGEAVEVRKDVYRSALVCSSSYVPSLEKINQIEEEEEDKCKSIKMVDTKRQRKKRKRKSKR</sequence>
<organism>
    <name type="scientific">Arabidopsis thaliana</name>
    <name type="common">Mouse-ear cress</name>
    <dbReference type="NCBI Taxonomy" id="3702"/>
    <lineage>
        <taxon>Eukaryota</taxon>
        <taxon>Viridiplantae</taxon>
        <taxon>Streptophyta</taxon>
        <taxon>Embryophyta</taxon>
        <taxon>Tracheophyta</taxon>
        <taxon>Spermatophyta</taxon>
        <taxon>Magnoliopsida</taxon>
        <taxon>eudicotyledons</taxon>
        <taxon>Gunneridae</taxon>
        <taxon>Pentapetalae</taxon>
        <taxon>rosids</taxon>
        <taxon>malvids</taxon>
        <taxon>Brassicales</taxon>
        <taxon>Brassicaceae</taxon>
        <taxon>Camelineae</taxon>
        <taxon>Arabidopsis</taxon>
    </lineage>
</organism>
<protein>
    <recommendedName>
        <fullName>F-box protein At3g19890</fullName>
    </recommendedName>
</protein>